<gene>
    <name evidence="1" type="primary">rplD</name>
    <name type="ordered locus">BB0030</name>
</gene>
<proteinExistence type="inferred from homology"/>
<feature type="chain" id="PRO_0000129187" description="Large ribosomal subunit protein uL4">
    <location>
        <begin position="1"/>
        <end position="205"/>
    </location>
</feature>
<feature type="region of interest" description="Disordered" evidence="2">
    <location>
        <begin position="43"/>
        <end position="95"/>
    </location>
</feature>
<feature type="compositionally biased region" description="Basic and acidic residues" evidence="2">
    <location>
        <begin position="48"/>
        <end position="57"/>
    </location>
</feature>
<feature type="compositionally biased region" description="Basic residues" evidence="2">
    <location>
        <begin position="58"/>
        <end position="69"/>
    </location>
</feature>
<organism>
    <name type="scientific">Bordetella bronchiseptica (strain ATCC BAA-588 / NCTC 13252 / RB50)</name>
    <name type="common">Alcaligenes bronchisepticus</name>
    <dbReference type="NCBI Taxonomy" id="257310"/>
    <lineage>
        <taxon>Bacteria</taxon>
        <taxon>Pseudomonadati</taxon>
        <taxon>Pseudomonadota</taxon>
        <taxon>Betaproteobacteria</taxon>
        <taxon>Burkholderiales</taxon>
        <taxon>Alcaligenaceae</taxon>
        <taxon>Bordetella</taxon>
    </lineage>
</organism>
<reference key="1">
    <citation type="journal article" date="2003" name="Nat. Genet.">
        <title>Comparative analysis of the genome sequences of Bordetella pertussis, Bordetella parapertussis and Bordetella bronchiseptica.</title>
        <authorList>
            <person name="Parkhill J."/>
            <person name="Sebaihia M."/>
            <person name="Preston A."/>
            <person name="Murphy L.D."/>
            <person name="Thomson N.R."/>
            <person name="Harris D.E."/>
            <person name="Holden M.T.G."/>
            <person name="Churcher C.M."/>
            <person name="Bentley S.D."/>
            <person name="Mungall K.L."/>
            <person name="Cerdeno-Tarraga A.-M."/>
            <person name="Temple L."/>
            <person name="James K.D."/>
            <person name="Harris B."/>
            <person name="Quail M.A."/>
            <person name="Achtman M."/>
            <person name="Atkin R."/>
            <person name="Baker S."/>
            <person name="Basham D."/>
            <person name="Bason N."/>
            <person name="Cherevach I."/>
            <person name="Chillingworth T."/>
            <person name="Collins M."/>
            <person name="Cronin A."/>
            <person name="Davis P."/>
            <person name="Doggett J."/>
            <person name="Feltwell T."/>
            <person name="Goble A."/>
            <person name="Hamlin N."/>
            <person name="Hauser H."/>
            <person name="Holroyd S."/>
            <person name="Jagels K."/>
            <person name="Leather S."/>
            <person name="Moule S."/>
            <person name="Norberczak H."/>
            <person name="O'Neil S."/>
            <person name="Ormond D."/>
            <person name="Price C."/>
            <person name="Rabbinowitsch E."/>
            <person name="Rutter S."/>
            <person name="Sanders M."/>
            <person name="Saunders D."/>
            <person name="Seeger K."/>
            <person name="Sharp S."/>
            <person name="Simmonds M."/>
            <person name="Skelton J."/>
            <person name="Squares R."/>
            <person name="Squares S."/>
            <person name="Stevens K."/>
            <person name="Unwin L."/>
            <person name="Whitehead S."/>
            <person name="Barrell B.G."/>
            <person name="Maskell D.J."/>
        </authorList>
    </citation>
    <scope>NUCLEOTIDE SEQUENCE [LARGE SCALE GENOMIC DNA]</scope>
    <source>
        <strain>ATCC BAA-588 / NCTC 13252 / RB50</strain>
    </source>
</reference>
<accession>Q7WRC4</accession>
<sequence>MDLKLLNDQGQAATFSAPDTIFGRDFNEALVHQIVVAFQANARSGNRAQKDRAEVKHSTKKPWRQKGTGRARAGMTSSPLWRGGGRAFPNSPEENFSQKVNKKMYRAGIRSILSQLAREDRVAVVDTFTLESPKTKLAAAKLKSLGLDSVLIITDNVDENVYLATRNLPHVAVVEPRYADPLSLIHYKKVLITKPAIAQLEEMLG</sequence>
<comment type="function">
    <text evidence="1">One of the primary rRNA binding proteins, this protein initially binds near the 5'-end of the 23S rRNA. It is important during the early stages of 50S assembly. It makes multiple contacts with different domains of the 23S rRNA in the assembled 50S subunit and ribosome.</text>
</comment>
<comment type="function">
    <text evidence="1">Forms part of the polypeptide exit tunnel.</text>
</comment>
<comment type="subunit">
    <text evidence="1">Part of the 50S ribosomal subunit.</text>
</comment>
<comment type="similarity">
    <text evidence="1">Belongs to the universal ribosomal protein uL4 family.</text>
</comment>
<keyword id="KW-0687">Ribonucleoprotein</keyword>
<keyword id="KW-0689">Ribosomal protein</keyword>
<keyword id="KW-0694">RNA-binding</keyword>
<keyword id="KW-0699">rRNA-binding</keyword>
<dbReference type="EMBL" id="BX640437">
    <property type="protein sequence ID" value="CAE30532.1"/>
    <property type="molecule type" value="Genomic_DNA"/>
</dbReference>
<dbReference type="RefSeq" id="WP_003806905.1">
    <property type="nucleotide sequence ID" value="NC_002927.3"/>
</dbReference>
<dbReference type="SMR" id="Q7WRC4"/>
<dbReference type="GeneID" id="93206259"/>
<dbReference type="KEGG" id="bbr:BB0030"/>
<dbReference type="eggNOG" id="COG0088">
    <property type="taxonomic scope" value="Bacteria"/>
</dbReference>
<dbReference type="HOGENOM" id="CLU_041575_5_2_4"/>
<dbReference type="Proteomes" id="UP000001027">
    <property type="component" value="Chromosome"/>
</dbReference>
<dbReference type="GO" id="GO:1990904">
    <property type="term" value="C:ribonucleoprotein complex"/>
    <property type="evidence" value="ECO:0007669"/>
    <property type="project" value="UniProtKB-KW"/>
</dbReference>
<dbReference type="GO" id="GO:0005840">
    <property type="term" value="C:ribosome"/>
    <property type="evidence" value="ECO:0007669"/>
    <property type="project" value="UniProtKB-KW"/>
</dbReference>
<dbReference type="GO" id="GO:0019843">
    <property type="term" value="F:rRNA binding"/>
    <property type="evidence" value="ECO:0007669"/>
    <property type="project" value="UniProtKB-UniRule"/>
</dbReference>
<dbReference type="GO" id="GO:0003735">
    <property type="term" value="F:structural constituent of ribosome"/>
    <property type="evidence" value="ECO:0007669"/>
    <property type="project" value="InterPro"/>
</dbReference>
<dbReference type="GO" id="GO:0006412">
    <property type="term" value="P:translation"/>
    <property type="evidence" value="ECO:0007669"/>
    <property type="project" value="UniProtKB-UniRule"/>
</dbReference>
<dbReference type="Gene3D" id="3.40.1370.10">
    <property type="match status" value="1"/>
</dbReference>
<dbReference type="HAMAP" id="MF_01328_B">
    <property type="entry name" value="Ribosomal_uL4_B"/>
    <property type="match status" value="1"/>
</dbReference>
<dbReference type="InterPro" id="IPR002136">
    <property type="entry name" value="Ribosomal_uL4"/>
</dbReference>
<dbReference type="InterPro" id="IPR013005">
    <property type="entry name" value="Ribosomal_uL4-like"/>
</dbReference>
<dbReference type="InterPro" id="IPR023574">
    <property type="entry name" value="Ribosomal_uL4_dom_sf"/>
</dbReference>
<dbReference type="NCBIfam" id="TIGR03953">
    <property type="entry name" value="rplD_bact"/>
    <property type="match status" value="1"/>
</dbReference>
<dbReference type="PANTHER" id="PTHR10746">
    <property type="entry name" value="50S RIBOSOMAL PROTEIN L4"/>
    <property type="match status" value="1"/>
</dbReference>
<dbReference type="PANTHER" id="PTHR10746:SF6">
    <property type="entry name" value="LARGE RIBOSOMAL SUBUNIT PROTEIN UL4M"/>
    <property type="match status" value="1"/>
</dbReference>
<dbReference type="Pfam" id="PF00573">
    <property type="entry name" value="Ribosomal_L4"/>
    <property type="match status" value="1"/>
</dbReference>
<dbReference type="SUPFAM" id="SSF52166">
    <property type="entry name" value="Ribosomal protein L4"/>
    <property type="match status" value="1"/>
</dbReference>
<name>RL4_BORBR</name>
<evidence type="ECO:0000255" key="1">
    <source>
        <dbReference type="HAMAP-Rule" id="MF_01328"/>
    </source>
</evidence>
<evidence type="ECO:0000256" key="2">
    <source>
        <dbReference type="SAM" id="MobiDB-lite"/>
    </source>
</evidence>
<evidence type="ECO:0000305" key="3"/>
<protein>
    <recommendedName>
        <fullName evidence="1">Large ribosomal subunit protein uL4</fullName>
    </recommendedName>
    <alternativeName>
        <fullName evidence="3">50S ribosomal protein L4</fullName>
    </alternativeName>
</protein>